<protein>
    <recommendedName>
        <fullName>Uncharacterized protein FAM241A</fullName>
    </recommendedName>
</protein>
<reference key="1">
    <citation type="journal article" date="2005" name="Science">
        <title>The transcriptional landscape of the mammalian genome.</title>
        <authorList>
            <person name="Carninci P."/>
            <person name="Kasukawa T."/>
            <person name="Katayama S."/>
            <person name="Gough J."/>
            <person name="Frith M.C."/>
            <person name="Maeda N."/>
            <person name="Oyama R."/>
            <person name="Ravasi T."/>
            <person name="Lenhard B."/>
            <person name="Wells C."/>
            <person name="Kodzius R."/>
            <person name="Shimokawa K."/>
            <person name="Bajic V.B."/>
            <person name="Brenner S.E."/>
            <person name="Batalov S."/>
            <person name="Forrest A.R."/>
            <person name="Zavolan M."/>
            <person name="Davis M.J."/>
            <person name="Wilming L.G."/>
            <person name="Aidinis V."/>
            <person name="Allen J.E."/>
            <person name="Ambesi-Impiombato A."/>
            <person name="Apweiler R."/>
            <person name="Aturaliya R.N."/>
            <person name="Bailey T.L."/>
            <person name="Bansal M."/>
            <person name="Baxter L."/>
            <person name="Beisel K.W."/>
            <person name="Bersano T."/>
            <person name="Bono H."/>
            <person name="Chalk A.M."/>
            <person name="Chiu K.P."/>
            <person name="Choudhary V."/>
            <person name="Christoffels A."/>
            <person name="Clutterbuck D.R."/>
            <person name="Crowe M.L."/>
            <person name="Dalla E."/>
            <person name="Dalrymple B.P."/>
            <person name="de Bono B."/>
            <person name="Della Gatta G."/>
            <person name="di Bernardo D."/>
            <person name="Down T."/>
            <person name="Engstrom P."/>
            <person name="Fagiolini M."/>
            <person name="Faulkner G."/>
            <person name="Fletcher C.F."/>
            <person name="Fukushima T."/>
            <person name="Furuno M."/>
            <person name="Futaki S."/>
            <person name="Gariboldi M."/>
            <person name="Georgii-Hemming P."/>
            <person name="Gingeras T.R."/>
            <person name="Gojobori T."/>
            <person name="Green R.E."/>
            <person name="Gustincich S."/>
            <person name="Harbers M."/>
            <person name="Hayashi Y."/>
            <person name="Hensch T.K."/>
            <person name="Hirokawa N."/>
            <person name="Hill D."/>
            <person name="Huminiecki L."/>
            <person name="Iacono M."/>
            <person name="Ikeo K."/>
            <person name="Iwama A."/>
            <person name="Ishikawa T."/>
            <person name="Jakt M."/>
            <person name="Kanapin A."/>
            <person name="Katoh M."/>
            <person name="Kawasawa Y."/>
            <person name="Kelso J."/>
            <person name="Kitamura H."/>
            <person name="Kitano H."/>
            <person name="Kollias G."/>
            <person name="Krishnan S.P."/>
            <person name="Kruger A."/>
            <person name="Kummerfeld S.K."/>
            <person name="Kurochkin I.V."/>
            <person name="Lareau L.F."/>
            <person name="Lazarevic D."/>
            <person name="Lipovich L."/>
            <person name="Liu J."/>
            <person name="Liuni S."/>
            <person name="McWilliam S."/>
            <person name="Madan Babu M."/>
            <person name="Madera M."/>
            <person name="Marchionni L."/>
            <person name="Matsuda H."/>
            <person name="Matsuzawa S."/>
            <person name="Miki H."/>
            <person name="Mignone F."/>
            <person name="Miyake S."/>
            <person name="Morris K."/>
            <person name="Mottagui-Tabar S."/>
            <person name="Mulder N."/>
            <person name="Nakano N."/>
            <person name="Nakauchi H."/>
            <person name="Ng P."/>
            <person name="Nilsson R."/>
            <person name="Nishiguchi S."/>
            <person name="Nishikawa S."/>
            <person name="Nori F."/>
            <person name="Ohara O."/>
            <person name="Okazaki Y."/>
            <person name="Orlando V."/>
            <person name="Pang K.C."/>
            <person name="Pavan W.J."/>
            <person name="Pavesi G."/>
            <person name="Pesole G."/>
            <person name="Petrovsky N."/>
            <person name="Piazza S."/>
            <person name="Reed J."/>
            <person name="Reid J.F."/>
            <person name="Ring B.Z."/>
            <person name="Ringwald M."/>
            <person name="Rost B."/>
            <person name="Ruan Y."/>
            <person name="Salzberg S.L."/>
            <person name="Sandelin A."/>
            <person name="Schneider C."/>
            <person name="Schoenbach C."/>
            <person name="Sekiguchi K."/>
            <person name="Semple C.A."/>
            <person name="Seno S."/>
            <person name="Sessa L."/>
            <person name="Sheng Y."/>
            <person name="Shibata Y."/>
            <person name="Shimada H."/>
            <person name="Shimada K."/>
            <person name="Silva D."/>
            <person name="Sinclair B."/>
            <person name="Sperling S."/>
            <person name="Stupka E."/>
            <person name="Sugiura K."/>
            <person name="Sultana R."/>
            <person name="Takenaka Y."/>
            <person name="Taki K."/>
            <person name="Tammoja K."/>
            <person name="Tan S.L."/>
            <person name="Tang S."/>
            <person name="Taylor M.S."/>
            <person name="Tegner J."/>
            <person name="Teichmann S.A."/>
            <person name="Ueda H.R."/>
            <person name="van Nimwegen E."/>
            <person name="Verardo R."/>
            <person name="Wei C.L."/>
            <person name="Yagi K."/>
            <person name="Yamanishi H."/>
            <person name="Zabarovsky E."/>
            <person name="Zhu S."/>
            <person name="Zimmer A."/>
            <person name="Hide W."/>
            <person name="Bult C."/>
            <person name="Grimmond S.M."/>
            <person name="Teasdale R.D."/>
            <person name="Liu E.T."/>
            <person name="Brusic V."/>
            <person name="Quackenbush J."/>
            <person name="Wahlestedt C."/>
            <person name="Mattick J.S."/>
            <person name="Hume D.A."/>
            <person name="Kai C."/>
            <person name="Sasaki D."/>
            <person name="Tomaru Y."/>
            <person name="Fukuda S."/>
            <person name="Kanamori-Katayama M."/>
            <person name="Suzuki M."/>
            <person name="Aoki J."/>
            <person name="Arakawa T."/>
            <person name="Iida J."/>
            <person name="Imamura K."/>
            <person name="Itoh M."/>
            <person name="Kato T."/>
            <person name="Kawaji H."/>
            <person name="Kawagashira N."/>
            <person name="Kawashima T."/>
            <person name="Kojima M."/>
            <person name="Kondo S."/>
            <person name="Konno H."/>
            <person name="Nakano K."/>
            <person name="Ninomiya N."/>
            <person name="Nishio T."/>
            <person name="Okada M."/>
            <person name="Plessy C."/>
            <person name="Shibata K."/>
            <person name="Shiraki T."/>
            <person name="Suzuki S."/>
            <person name="Tagami M."/>
            <person name="Waki K."/>
            <person name="Watahiki A."/>
            <person name="Okamura-Oho Y."/>
            <person name="Suzuki H."/>
            <person name="Kawai J."/>
            <person name="Hayashizaki Y."/>
        </authorList>
    </citation>
    <scope>NUCLEOTIDE SEQUENCE [LARGE SCALE MRNA]</scope>
    <source>
        <strain>C57BL/6J</strain>
        <tissue>Embryo</tissue>
    </source>
</reference>
<reference key="2">
    <citation type="journal article" date="2004" name="Genome Res.">
        <title>The status, quality, and expansion of the NIH full-length cDNA project: the Mammalian Gene Collection (MGC).</title>
        <authorList>
            <consortium name="The MGC Project Team"/>
        </authorList>
    </citation>
    <scope>NUCLEOTIDE SEQUENCE [LARGE SCALE MRNA]</scope>
    <source>
        <tissue>Brain</tissue>
    </source>
</reference>
<reference key="3">
    <citation type="journal article" date="2010" name="Cell">
        <title>A tissue-specific atlas of mouse protein phosphorylation and expression.</title>
        <authorList>
            <person name="Huttlin E.L."/>
            <person name="Jedrychowski M.P."/>
            <person name="Elias J.E."/>
            <person name="Goswami T."/>
            <person name="Rad R."/>
            <person name="Beausoleil S.A."/>
            <person name="Villen J."/>
            <person name="Haas W."/>
            <person name="Sowa M.E."/>
            <person name="Gygi S.P."/>
        </authorList>
    </citation>
    <scope>PHOSPHORYLATION [LARGE SCALE ANALYSIS] AT SER-14</scope>
    <scope>IDENTIFICATION BY MASS SPECTROMETRY [LARGE SCALE ANALYSIS]</scope>
    <source>
        <tissue>Brown adipose tissue</tissue>
        <tissue>Kidney</tissue>
        <tissue>Liver</tissue>
        <tissue>Lung</tissue>
        <tissue>Pancreas</tissue>
        <tissue>Spleen</tissue>
        <tissue>Testis</tissue>
    </source>
</reference>
<feature type="chain" id="PRO_0000286630" description="Uncharacterized protein FAM241A">
    <location>
        <begin position="1"/>
        <end position="131"/>
    </location>
</feature>
<feature type="transmembrane region" description="Helical" evidence="1">
    <location>
        <begin position="99"/>
        <end position="119"/>
    </location>
</feature>
<feature type="region of interest" description="Disordered" evidence="2">
    <location>
        <begin position="1"/>
        <end position="67"/>
    </location>
</feature>
<feature type="modified residue" description="Phosphoserine" evidence="4">
    <location>
        <position position="14"/>
    </location>
</feature>
<sequence length="131" mass="14511">MCSARKLLRGGAGSAGGECDEDGAAPAGRVEEPEHGASPRRRRPQDEGEQDIEEPQNHSGEPIGDDYKKMGTLFGELNKNLLNMGFTRMYFGERIVEPVVVLFFWLMLWFLGLQALGLVAVLCLVIIYVQQ</sequence>
<gene>
    <name type="primary">Fam241a</name>
</gene>
<evidence type="ECO:0000255" key="1"/>
<evidence type="ECO:0000256" key="2">
    <source>
        <dbReference type="SAM" id="MobiDB-lite"/>
    </source>
</evidence>
<evidence type="ECO:0000305" key="3"/>
<evidence type="ECO:0007744" key="4">
    <source>
    </source>
</evidence>
<dbReference type="EMBL" id="AK012470">
    <property type="protein sequence ID" value="BAB28264.1"/>
    <property type="molecule type" value="mRNA"/>
</dbReference>
<dbReference type="EMBL" id="AK162420">
    <property type="protein sequence ID" value="BAE36906.1"/>
    <property type="molecule type" value="mRNA"/>
</dbReference>
<dbReference type="EMBL" id="BC116791">
    <property type="protein sequence ID" value="AAI16792.1"/>
    <property type="molecule type" value="mRNA"/>
</dbReference>
<dbReference type="EMBL" id="BC116793">
    <property type="protein sequence ID" value="AAI16794.1"/>
    <property type="molecule type" value="mRNA"/>
</dbReference>
<dbReference type="CCDS" id="CCDS17829.1"/>
<dbReference type="RefSeq" id="NP_081758.1">
    <property type="nucleotide sequence ID" value="NM_027482.3"/>
</dbReference>
<dbReference type="SMR" id="Q9CZL2"/>
<dbReference type="FunCoup" id="Q9CZL2">
    <property type="interactions" value="1114"/>
</dbReference>
<dbReference type="STRING" id="10090.ENSMUSP00000142535"/>
<dbReference type="iPTMnet" id="Q9CZL2"/>
<dbReference type="PhosphoSitePlus" id="Q9CZL2"/>
<dbReference type="SwissPalm" id="Q9CZL2"/>
<dbReference type="PaxDb" id="10090-ENSMUSP00000062387"/>
<dbReference type="ProteomicsDB" id="275517"/>
<dbReference type="Antibodypedia" id="54648">
    <property type="antibodies" value="9 antibodies from 4 providers"/>
</dbReference>
<dbReference type="DNASU" id="70617"/>
<dbReference type="Ensembl" id="ENSMUST00000199273.2">
    <property type="protein sequence ID" value="ENSMUSP00000142535.2"/>
    <property type="gene ID" value="ENSMUSG00000050549.9"/>
</dbReference>
<dbReference type="GeneID" id="70617"/>
<dbReference type="KEGG" id="mmu:70617"/>
<dbReference type="UCSC" id="uc008rhr.2">
    <property type="organism name" value="mouse"/>
</dbReference>
<dbReference type="AGR" id="MGI:1917867"/>
<dbReference type="CTD" id="132720"/>
<dbReference type="MGI" id="MGI:1917867">
    <property type="gene designation" value="Fam241a"/>
</dbReference>
<dbReference type="VEuPathDB" id="HostDB:ENSMUSG00000050549"/>
<dbReference type="eggNOG" id="ENOG502S3RI">
    <property type="taxonomic scope" value="Eukaryota"/>
</dbReference>
<dbReference type="GeneTree" id="ENSGT00940000154340"/>
<dbReference type="HOGENOM" id="CLU_2903573_0_0_1"/>
<dbReference type="InParanoid" id="Q9CZL2"/>
<dbReference type="OMA" id="MCSAGQL"/>
<dbReference type="OrthoDB" id="9903800at2759"/>
<dbReference type="PhylomeDB" id="Q9CZL2"/>
<dbReference type="TreeFam" id="TF335755"/>
<dbReference type="BioGRID-ORCS" id="70617">
    <property type="hits" value="3 hits in 46 CRISPR screens"/>
</dbReference>
<dbReference type="PRO" id="PR:Q9CZL2"/>
<dbReference type="Proteomes" id="UP000000589">
    <property type="component" value="Chromosome 3"/>
</dbReference>
<dbReference type="RNAct" id="Q9CZL2">
    <property type="molecule type" value="protein"/>
</dbReference>
<dbReference type="Bgee" id="ENSMUSG00000050549">
    <property type="expression patterns" value="Expressed in conjunctival fornix and 193 other cell types or tissues"/>
</dbReference>
<dbReference type="ExpressionAtlas" id="Q9CZL2">
    <property type="expression patterns" value="baseline and differential"/>
</dbReference>
<dbReference type="GO" id="GO:0005794">
    <property type="term" value="C:Golgi apparatus"/>
    <property type="evidence" value="ECO:0007669"/>
    <property type="project" value="Ensembl"/>
</dbReference>
<dbReference type="GO" id="GO:0016020">
    <property type="term" value="C:membrane"/>
    <property type="evidence" value="ECO:0007669"/>
    <property type="project" value="UniProtKB-SubCell"/>
</dbReference>
<dbReference type="InterPro" id="IPR027953">
    <property type="entry name" value="DUF4605"/>
</dbReference>
<dbReference type="InterPro" id="IPR052502">
    <property type="entry name" value="FAM241_domain"/>
</dbReference>
<dbReference type="PANTHER" id="PTHR33690">
    <property type="entry name" value="DUF4605 DOMAIN-CONTAINING PROTEIN"/>
    <property type="match status" value="1"/>
</dbReference>
<dbReference type="PANTHER" id="PTHR33690:SF1">
    <property type="entry name" value="FAMILY WITH SEQUENCE SIMILARITY 241 MEMBER A"/>
    <property type="match status" value="1"/>
</dbReference>
<dbReference type="Pfam" id="PF15378">
    <property type="entry name" value="DUF4605"/>
    <property type="match status" value="1"/>
</dbReference>
<organism>
    <name type="scientific">Mus musculus</name>
    <name type="common">Mouse</name>
    <dbReference type="NCBI Taxonomy" id="10090"/>
    <lineage>
        <taxon>Eukaryota</taxon>
        <taxon>Metazoa</taxon>
        <taxon>Chordata</taxon>
        <taxon>Craniata</taxon>
        <taxon>Vertebrata</taxon>
        <taxon>Euteleostomi</taxon>
        <taxon>Mammalia</taxon>
        <taxon>Eutheria</taxon>
        <taxon>Euarchontoglires</taxon>
        <taxon>Glires</taxon>
        <taxon>Rodentia</taxon>
        <taxon>Myomorpha</taxon>
        <taxon>Muroidea</taxon>
        <taxon>Muridae</taxon>
        <taxon>Murinae</taxon>
        <taxon>Mus</taxon>
        <taxon>Mus</taxon>
    </lineage>
</organism>
<comment type="subcellular location">
    <subcellularLocation>
        <location evidence="3">Membrane</location>
        <topology evidence="1">Single-pass membrane protein</topology>
    </subcellularLocation>
</comment>
<comment type="similarity">
    <text evidence="3">Belongs to the FAM241 family.</text>
</comment>
<accession>Q9CZL2</accession>
<keyword id="KW-0472">Membrane</keyword>
<keyword id="KW-0597">Phosphoprotein</keyword>
<keyword id="KW-1185">Reference proteome</keyword>
<keyword id="KW-0812">Transmembrane</keyword>
<keyword id="KW-1133">Transmembrane helix</keyword>
<name>F241A_MOUSE</name>
<proteinExistence type="evidence at protein level"/>